<reference key="1">
    <citation type="submission" date="2008-04" db="EMBL/GenBank/DDBJ databases">
        <title>Complete sequence of chromosome of Natranaerobius thermophilus JW/NM-WN-LF.</title>
        <authorList>
            <consortium name="US DOE Joint Genome Institute"/>
            <person name="Copeland A."/>
            <person name="Lucas S."/>
            <person name="Lapidus A."/>
            <person name="Glavina del Rio T."/>
            <person name="Dalin E."/>
            <person name="Tice H."/>
            <person name="Bruce D."/>
            <person name="Goodwin L."/>
            <person name="Pitluck S."/>
            <person name="Chertkov O."/>
            <person name="Brettin T."/>
            <person name="Detter J.C."/>
            <person name="Han C."/>
            <person name="Kuske C.R."/>
            <person name="Schmutz J."/>
            <person name="Larimer F."/>
            <person name="Land M."/>
            <person name="Hauser L."/>
            <person name="Kyrpides N."/>
            <person name="Lykidis A."/>
            <person name="Mesbah N.M."/>
            <person name="Wiegel J."/>
        </authorList>
    </citation>
    <scope>NUCLEOTIDE SEQUENCE [LARGE SCALE GENOMIC DNA]</scope>
    <source>
        <strain>ATCC BAA-1301 / DSM 18059 / JW/NM-WN-LF</strain>
    </source>
</reference>
<gene>
    <name evidence="1" type="primary">mnmE</name>
    <name evidence="1" type="synonym">trmE</name>
    <name type="ordered locus">Nther_2930</name>
</gene>
<evidence type="ECO:0000255" key="1">
    <source>
        <dbReference type="HAMAP-Rule" id="MF_00379"/>
    </source>
</evidence>
<name>MNME_NATTJ</name>
<accession>B2A470</accession>
<sequence>MTEDTIAALSTPPGEGGIAVIRVSGPDSQNKVKQIFRSSRTDGNFNNKKMYHGQIVSPETNRILDEVLVVFMNKPYTYTCEDVVEIHCHGGMVPVKEILQLLFSYGIRPAEPGEFTKRAFLNGRLDLTQAEGVMDLITSKTNNLKNVAINQLQGNLKQKIDRLRDDLVSVMANLEARIDFPDEDIDVEDYHELKHRIDNAKVDINNLIASYDKGKIIREGIKTVIVGRPNVGKSSLLNLLLGEERAIVTEIPGTTRDVLEEVINLKGIPLRIIDTAGIRESEDKVEQIGVKRTRDSMEQADIILVVIDSSQELSQEDKQILTMAQDKTSLLVLNKTDLHEKLDIDEIDKLVSQIPKVRISALKEEGLDKLEEHISELVFGGQVMQTEELVITKARHFHSLDKVKEALSSAEENIKAEMSEDLIAIDIKEAYDYLGEITGETASEELVDRIFNDFCIGK</sequence>
<organism>
    <name type="scientific">Natranaerobius thermophilus (strain ATCC BAA-1301 / DSM 18059 / JW/NM-WN-LF)</name>
    <dbReference type="NCBI Taxonomy" id="457570"/>
    <lineage>
        <taxon>Bacteria</taxon>
        <taxon>Bacillati</taxon>
        <taxon>Bacillota</taxon>
        <taxon>Clostridia</taxon>
        <taxon>Natranaerobiales</taxon>
        <taxon>Natranaerobiaceae</taxon>
        <taxon>Natranaerobius</taxon>
    </lineage>
</organism>
<feature type="chain" id="PRO_0000345847" description="tRNA modification GTPase MnmE">
    <location>
        <begin position="1"/>
        <end position="458"/>
    </location>
</feature>
<feature type="domain" description="TrmE-type G">
    <location>
        <begin position="220"/>
        <end position="379"/>
    </location>
</feature>
<feature type="binding site" evidence="1">
    <location>
        <position position="22"/>
    </location>
    <ligand>
        <name>(6S)-5-formyl-5,6,7,8-tetrahydrofolate</name>
        <dbReference type="ChEBI" id="CHEBI:57457"/>
    </ligand>
</feature>
<feature type="binding site" evidence="1">
    <location>
        <position position="85"/>
    </location>
    <ligand>
        <name>(6S)-5-formyl-5,6,7,8-tetrahydrofolate</name>
        <dbReference type="ChEBI" id="CHEBI:57457"/>
    </ligand>
</feature>
<feature type="binding site" evidence="1">
    <location>
        <position position="124"/>
    </location>
    <ligand>
        <name>(6S)-5-formyl-5,6,7,8-tetrahydrofolate</name>
        <dbReference type="ChEBI" id="CHEBI:57457"/>
    </ligand>
</feature>
<feature type="binding site" evidence="1">
    <location>
        <begin position="230"/>
        <end position="235"/>
    </location>
    <ligand>
        <name>GTP</name>
        <dbReference type="ChEBI" id="CHEBI:37565"/>
    </ligand>
</feature>
<feature type="binding site" evidence="1">
    <location>
        <position position="230"/>
    </location>
    <ligand>
        <name>K(+)</name>
        <dbReference type="ChEBI" id="CHEBI:29103"/>
    </ligand>
</feature>
<feature type="binding site" evidence="1">
    <location>
        <position position="234"/>
    </location>
    <ligand>
        <name>Mg(2+)</name>
        <dbReference type="ChEBI" id="CHEBI:18420"/>
    </ligand>
</feature>
<feature type="binding site" evidence="1">
    <location>
        <begin position="249"/>
        <end position="255"/>
    </location>
    <ligand>
        <name>GTP</name>
        <dbReference type="ChEBI" id="CHEBI:37565"/>
    </ligand>
</feature>
<feature type="binding site" evidence="1">
    <location>
        <position position="249"/>
    </location>
    <ligand>
        <name>K(+)</name>
        <dbReference type="ChEBI" id="CHEBI:29103"/>
    </ligand>
</feature>
<feature type="binding site" evidence="1">
    <location>
        <position position="251"/>
    </location>
    <ligand>
        <name>K(+)</name>
        <dbReference type="ChEBI" id="CHEBI:29103"/>
    </ligand>
</feature>
<feature type="binding site" evidence="1">
    <location>
        <position position="254"/>
    </location>
    <ligand>
        <name>K(+)</name>
        <dbReference type="ChEBI" id="CHEBI:29103"/>
    </ligand>
</feature>
<feature type="binding site" evidence="1">
    <location>
        <position position="255"/>
    </location>
    <ligand>
        <name>Mg(2+)</name>
        <dbReference type="ChEBI" id="CHEBI:18420"/>
    </ligand>
</feature>
<feature type="binding site" evidence="1">
    <location>
        <begin position="274"/>
        <end position="277"/>
    </location>
    <ligand>
        <name>GTP</name>
        <dbReference type="ChEBI" id="CHEBI:37565"/>
    </ligand>
</feature>
<feature type="binding site" evidence="1">
    <location>
        <position position="458"/>
    </location>
    <ligand>
        <name>(6S)-5-formyl-5,6,7,8-tetrahydrofolate</name>
        <dbReference type="ChEBI" id="CHEBI:57457"/>
    </ligand>
</feature>
<dbReference type="EC" id="3.6.-.-" evidence="1"/>
<dbReference type="EMBL" id="CP001034">
    <property type="protein sequence ID" value="ACB86476.1"/>
    <property type="molecule type" value="Genomic_DNA"/>
</dbReference>
<dbReference type="RefSeq" id="WP_012449308.1">
    <property type="nucleotide sequence ID" value="NC_010718.1"/>
</dbReference>
<dbReference type="SMR" id="B2A470"/>
<dbReference type="FunCoup" id="B2A470">
    <property type="interactions" value="403"/>
</dbReference>
<dbReference type="STRING" id="457570.Nther_2930"/>
<dbReference type="KEGG" id="nth:Nther_2930"/>
<dbReference type="eggNOG" id="COG0486">
    <property type="taxonomic scope" value="Bacteria"/>
</dbReference>
<dbReference type="HOGENOM" id="CLU_019624_4_1_9"/>
<dbReference type="InParanoid" id="B2A470"/>
<dbReference type="OrthoDB" id="9805918at2"/>
<dbReference type="Proteomes" id="UP000001683">
    <property type="component" value="Chromosome"/>
</dbReference>
<dbReference type="GO" id="GO:0005829">
    <property type="term" value="C:cytosol"/>
    <property type="evidence" value="ECO:0007669"/>
    <property type="project" value="TreeGrafter"/>
</dbReference>
<dbReference type="GO" id="GO:0005525">
    <property type="term" value="F:GTP binding"/>
    <property type="evidence" value="ECO:0007669"/>
    <property type="project" value="UniProtKB-UniRule"/>
</dbReference>
<dbReference type="GO" id="GO:0003924">
    <property type="term" value="F:GTPase activity"/>
    <property type="evidence" value="ECO:0007669"/>
    <property type="project" value="UniProtKB-UniRule"/>
</dbReference>
<dbReference type="GO" id="GO:0046872">
    <property type="term" value="F:metal ion binding"/>
    <property type="evidence" value="ECO:0007669"/>
    <property type="project" value="UniProtKB-KW"/>
</dbReference>
<dbReference type="GO" id="GO:0030488">
    <property type="term" value="P:tRNA methylation"/>
    <property type="evidence" value="ECO:0007669"/>
    <property type="project" value="TreeGrafter"/>
</dbReference>
<dbReference type="GO" id="GO:0002098">
    <property type="term" value="P:tRNA wobble uridine modification"/>
    <property type="evidence" value="ECO:0007669"/>
    <property type="project" value="TreeGrafter"/>
</dbReference>
<dbReference type="CDD" id="cd04164">
    <property type="entry name" value="trmE"/>
    <property type="match status" value="1"/>
</dbReference>
<dbReference type="CDD" id="cd14858">
    <property type="entry name" value="TrmE_N"/>
    <property type="match status" value="1"/>
</dbReference>
<dbReference type="FunFam" id="3.30.1360.120:FF:000003">
    <property type="entry name" value="tRNA modification GTPase MnmE"/>
    <property type="match status" value="1"/>
</dbReference>
<dbReference type="FunFam" id="3.40.50.300:FF:000494">
    <property type="entry name" value="tRNA modification GTPase MnmE"/>
    <property type="match status" value="1"/>
</dbReference>
<dbReference type="Gene3D" id="3.40.50.300">
    <property type="entry name" value="P-loop containing nucleotide triphosphate hydrolases"/>
    <property type="match status" value="1"/>
</dbReference>
<dbReference type="Gene3D" id="3.30.1360.120">
    <property type="entry name" value="Probable tRNA modification gtpase trme, domain 1"/>
    <property type="match status" value="1"/>
</dbReference>
<dbReference type="Gene3D" id="1.20.120.430">
    <property type="entry name" value="tRNA modification GTPase MnmE domain 2"/>
    <property type="match status" value="1"/>
</dbReference>
<dbReference type="HAMAP" id="MF_00379">
    <property type="entry name" value="GTPase_MnmE"/>
    <property type="match status" value="1"/>
</dbReference>
<dbReference type="InterPro" id="IPR031168">
    <property type="entry name" value="G_TrmE"/>
</dbReference>
<dbReference type="InterPro" id="IPR006073">
    <property type="entry name" value="GTP-bd"/>
</dbReference>
<dbReference type="InterPro" id="IPR018948">
    <property type="entry name" value="GTP-bd_TrmE_N"/>
</dbReference>
<dbReference type="InterPro" id="IPR004520">
    <property type="entry name" value="GTPase_MnmE"/>
</dbReference>
<dbReference type="InterPro" id="IPR027368">
    <property type="entry name" value="MnmE_dom2"/>
</dbReference>
<dbReference type="InterPro" id="IPR025867">
    <property type="entry name" value="MnmE_helical"/>
</dbReference>
<dbReference type="InterPro" id="IPR027417">
    <property type="entry name" value="P-loop_NTPase"/>
</dbReference>
<dbReference type="InterPro" id="IPR005225">
    <property type="entry name" value="Small_GTP-bd"/>
</dbReference>
<dbReference type="InterPro" id="IPR027266">
    <property type="entry name" value="TrmE/GcvT_dom1"/>
</dbReference>
<dbReference type="NCBIfam" id="TIGR00450">
    <property type="entry name" value="mnmE_trmE_thdF"/>
    <property type="match status" value="1"/>
</dbReference>
<dbReference type="NCBIfam" id="NF003661">
    <property type="entry name" value="PRK05291.1-3"/>
    <property type="match status" value="1"/>
</dbReference>
<dbReference type="NCBIfam" id="TIGR00231">
    <property type="entry name" value="small_GTP"/>
    <property type="match status" value="1"/>
</dbReference>
<dbReference type="PANTHER" id="PTHR42714">
    <property type="entry name" value="TRNA MODIFICATION GTPASE GTPBP3"/>
    <property type="match status" value="1"/>
</dbReference>
<dbReference type="PANTHER" id="PTHR42714:SF2">
    <property type="entry name" value="TRNA MODIFICATION GTPASE GTPBP3, MITOCHONDRIAL"/>
    <property type="match status" value="1"/>
</dbReference>
<dbReference type="Pfam" id="PF01926">
    <property type="entry name" value="MMR_HSR1"/>
    <property type="match status" value="1"/>
</dbReference>
<dbReference type="Pfam" id="PF12631">
    <property type="entry name" value="MnmE_helical"/>
    <property type="match status" value="1"/>
</dbReference>
<dbReference type="Pfam" id="PF10396">
    <property type="entry name" value="TrmE_N"/>
    <property type="match status" value="1"/>
</dbReference>
<dbReference type="PRINTS" id="PR00449">
    <property type="entry name" value="RASTRNSFRMNG"/>
</dbReference>
<dbReference type="SUPFAM" id="SSF52540">
    <property type="entry name" value="P-loop containing nucleoside triphosphate hydrolases"/>
    <property type="match status" value="1"/>
</dbReference>
<dbReference type="PROSITE" id="PS51709">
    <property type="entry name" value="G_TRME"/>
    <property type="match status" value="1"/>
</dbReference>
<protein>
    <recommendedName>
        <fullName evidence="1">tRNA modification GTPase MnmE</fullName>
        <ecNumber evidence="1">3.6.-.-</ecNumber>
    </recommendedName>
</protein>
<proteinExistence type="inferred from homology"/>
<keyword id="KW-0963">Cytoplasm</keyword>
<keyword id="KW-0342">GTP-binding</keyword>
<keyword id="KW-0378">Hydrolase</keyword>
<keyword id="KW-0460">Magnesium</keyword>
<keyword id="KW-0479">Metal-binding</keyword>
<keyword id="KW-0547">Nucleotide-binding</keyword>
<keyword id="KW-0630">Potassium</keyword>
<keyword id="KW-1185">Reference proteome</keyword>
<keyword id="KW-0819">tRNA processing</keyword>
<comment type="function">
    <text evidence="1">Exhibits a very high intrinsic GTPase hydrolysis rate. Involved in the addition of a carboxymethylaminomethyl (cmnm) group at the wobble position (U34) of certain tRNAs, forming tRNA-cmnm(5)s(2)U34.</text>
</comment>
<comment type="cofactor">
    <cofactor evidence="1">
        <name>K(+)</name>
        <dbReference type="ChEBI" id="CHEBI:29103"/>
    </cofactor>
    <text evidence="1">Binds 1 potassium ion per subunit.</text>
</comment>
<comment type="subunit">
    <text evidence="1">Homodimer. Heterotetramer of two MnmE and two MnmG subunits.</text>
</comment>
<comment type="subcellular location">
    <subcellularLocation>
        <location evidence="1">Cytoplasm</location>
    </subcellularLocation>
</comment>
<comment type="similarity">
    <text evidence="1">Belongs to the TRAFAC class TrmE-Era-EngA-EngB-Septin-like GTPase superfamily. TrmE GTPase family.</text>
</comment>